<feature type="chain" id="PRO_1000008049" description="DNA mismatch repair protein MutS">
    <location>
        <begin position="1"/>
        <end position="885"/>
    </location>
</feature>
<feature type="binding site" evidence="1">
    <location>
        <begin position="626"/>
        <end position="633"/>
    </location>
    <ligand>
        <name>ATP</name>
        <dbReference type="ChEBI" id="CHEBI:30616"/>
    </ligand>
</feature>
<protein>
    <recommendedName>
        <fullName evidence="1">DNA mismatch repair protein MutS</fullName>
    </recommendedName>
</protein>
<gene>
    <name evidence="1" type="primary">mutS</name>
    <name type="ordered locus">Bcen2424_2088</name>
</gene>
<comment type="function">
    <text evidence="1">This protein is involved in the repair of mismatches in DNA. It is possible that it carries out the mismatch recognition step. This protein has a weak ATPase activity.</text>
</comment>
<comment type="similarity">
    <text evidence="1">Belongs to the DNA mismatch repair MutS family.</text>
</comment>
<keyword id="KW-0067">ATP-binding</keyword>
<keyword id="KW-0227">DNA damage</keyword>
<keyword id="KW-0234">DNA repair</keyword>
<keyword id="KW-0238">DNA-binding</keyword>
<keyword id="KW-0547">Nucleotide-binding</keyword>
<accession>A0K8L2</accession>
<name>MUTS_BURCH</name>
<reference key="1">
    <citation type="submission" date="2006-08" db="EMBL/GenBank/DDBJ databases">
        <title>Complete sequence of chromosome 1 of Burkholderia cenocepacia HI2424.</title>
        <authorList>
            <person name="Copeland A."/>
            <person name="Lucas S."/>
            <person name="Lapidus A."/>
            <person name="Barry K."/>
            <person name="Detter J.C."/>
            <person name="Glavina del Rio T."/>
            <person name="Hammon N."/>
            <person name="Israni S."/>
            <person name="Pitluck S."/>
            <person name="Chain P."/>
            <person name="Malfatti S."/>
            <person name="Shin M."/>
            <person name="Vergez L."/>
            <person name="Schmutz J."/>
            <person name="Larimer F."/>
            <person name="Land M."/>
            <person name="Hauser L."/>
            <person name="Kyrpides N."/>
            <person name="Kim E."/>
            <person name="LiPuma J.J."/>
            <person name="Gonzalez C.F."/>
            <person name="Konstantinidis K."/>
            <person name="Tiedje J.M."/>
            <person name="Richardson P."/>
        </authorList>
    </citation>
    <scope>NUCLEOTIDE SEQUENCE [LARGE SCALE GENOMIC DNA]</scope>
    <source>
        <strain>HI2424</strain>
    </source>
</reference>
<proteinExistence type="inferred from homology"/>
<organism>
    <name type="scientific">Burkholderia cenocepacia (strain HI2424)</name>
    <dbReference type="NCBI Taxonomy" id="331272"/>
    <lineage>
        <taxon>Bacteria</taxon>
        <taxon>Pseudomonadati</taxon>
        <taxon>Pseudomonadota</taxon>
        <taxon>Betaproteobacteria</taxon>
        <taxon>Burkholderiales</taxon>
        <taxon>Burkholderiaceae</taxon>
        <taxon>Burkholderia</taxon>
        <taxon>Burkholderia cepacia complex</taxon>
    </lineage>
</organism>
<sequence length="885" mass="95939">MTTLSPEAFAGHTPMMQQYLRIKADHPDTLVFYRMGDFYELFFEDAEKAARLLDLTLTQRGASAGTPIKMAGVPHHAVEQYLAKLVKMGESVAICEQIGDPATSKGPVERKVVRVVTPGTLTDAALLSDKNDVYLLAMCTGHNKRGVAVNIGLAWLNLASGALRLAEIEPDQLAAALERIRPAEILTPDGATDAIPAGAGASKRVPAWHFDIASGTQRLCDQLDVASLDGFGAHSLTSACGAAGALLLYAAATQGQQLRHVRSLKVENETEYIGLDPATRRNLELTETLRGTESPTLYSLLDTCCTTMGSRLLRHWLHHPPRASVAAQSRQQAIGALLDAPANASLDALRSALRQIADVERITGRLALLSARPRDLSSLRDTFAALPALRERIGAIVANADALARVDAALAPPAECLDLLTSAIAPEPAAMVRDGGVIARGYDAELDELRDISENCGQFLIDLEARERARTGIANLRVEYNKVHGFYIEVTRGQTDKVPDDYRRRQTLKNAERYITPELKTFEDKALSAQERALARERALYDSVLQALLPFIPECQRVASALAELDLLAAFAERARALDWVAPTFTDEIGIEIEQGRHPVVEAQVEQFIANDCRFGTERKLLLITGPNMGGKSTFMRQTALIALMAYVGSYVPAKSACFGPIDRIFTRIGAADDLAGGRSTFMVEMTEAAAILNDATPQSLVLMDEIGRGTSTFDGLALAWAIARHLLAHNACYTLFATHYFELTQLPAEFPQAANVHLSAVEHGHGIVFLHAVNEGPANQSYGLQVAQLAGVPAPVIRAARKHLAYLEQQSASQHTPQLDLFSAPPAAVDDLECADAPALPDTPHPALEKLRDIDPDDLKPREALDLLYELRTLVRSHDADGHA</sequence>
<evidence type="ECO:0000255" key="1">
    <source>
        <dbReference type="HAMAP-Rule" id="MF_00096"/>
    </source>
</evidence>
<dbReference type="EMBL" id="CP000458">
    <property type="protein sequence ID" value="ABK08839.1"/>
    <property type="molecule type" value="Genomic_DNA"/>
</dbReference>
<dbReference type="RefSeq" id="WP_011694318.1">
    <property type="nucleotide sequence ID" value="NC_008542.1"/>
</dbReference>
<dbReference type="SMR" id="A0K8L2"/>
<dbReference type="KEGG" id="bch:Bcen2424_2088"/>
<dbReference type="HOGENOM" id="CLU_002472_4_0_4"/>
<dbReference type="GO" id="GO:0005829">
    <property type="term" value="C:cytosol"/>
    <property type="evidence" value="ECO:0007669"/>
    <property type="project" value="TreeGrafter"/>
</dbReference>
<dbReference type="GO" id="GO:0005524">
    <property type="term" value="F:ATP binding"/>
    <property type="evidence" value="ECO:0007669"/>
    <property type="project" value="UniProtKB-UniRule"/>
</dbReference>
<dbReference type="GO" id="GO:0140664">
    <property type="term" value="F:ATP-dependent DNA damage sensor activity"/>
    <property type="evidence" value="ECO:0007669"/>
    <property type="project" value="InterPro"/>
</dbReference>
<dbReference type="GO" id="GO:0003684">
    <property type="term" value="F:damaged DNA binding"/>
    <property type="evidence" value="ECO:0007669"/>
    <property type="project" value="UniProtKB-UniRule"/>
</dbReference>
<dbReference type="GO" id="GO:0030983">
    <property type="term" value="F:mismatched DNA binding"/>
    <property type="evidence" value="ECO:0007669"/>
    <property type="project" value="InterPro"/>
</dbReference>
<dbReference type="GO" id="GO:0006298">
    <property type="term" value="P:mismatch repair"/>
    <property type="evidence" value="ECO:0007669"/>
    <property type="project" value="UniProtKB-UniRule"/>
</dbReference>
<dbReference type="CDD" id="cd03284">
    <property type="entry name" value="ABC_MutS1"/>
    <property type="match status" value="1"/>
</dbReference>
<dbReference type="FunFam" id="3.40.1170.10:FF:000001">
    <property type="entry name" value="DNA mismatch repair protein MutS"/>
    <property type="match status" value="1"/>
</dbReference>
<dbReference type="FunFam" id="3.40.50.300:FF:000870">
    <property type="entry name" value="MutS protein homolog 4"/>
    <property type="match status" value="1"/>
</dbReference>
<dbReference type="Gene3D" id="1.10.1420.10">
    <property type="match status" value="2"/>
</dbReference>
<dbReference type="Gene3D" id="6.10.140.430">
    <property type="match status" value="1"/>
</dbReference>
<dbReference type="Gene3D" id="3.40.1170.10">
    <property type="entry name" value="DNA repair protein MutS, domain I"/>
    <property type="match status" value="1"/>
</dbReference>
<dbReference type="Gene3D" id="3.30.420.110">
    <property type="entry name" value="MutS, connector domain"/>
    <property type="match status" value="1"/>
</dbReference>
<dbReference type="Gene3D" id="3.40.50.300">
    <property type="entry name" value="P-loop containing nucleotide triphosphate hydrolases"/>
    <property type="match status" value="1"/>
</dbReference>
<dbReference type="HAMAP" id="MF_00096">
    <property type="entry name" value="MutS"/>
    <property type="match status" value="1"/>
</dbReference>
<dbReference type="InterPro" id="IPR005748">
    <property type="entry name" value="DNA_mismatch_repair_MutS"/>
</dbReference>
<dbReference type="InterPro" id="IPR007695">
    <property type="entry name" value="DNA_mismatch_repair_MutS-lik_N"/>
</dbReference>
<dbReference type="InterPro" id="IPR017261">
    <property type="entry name" value="DNA_mismatch_repair_MutS/MSH"/>
</dbReference>
<dbReference type="InterPro" id="IPR000432">
    <property type="entry name" value="DNA_mismatch_repair_MutS_C"/>
</dbReference>
<dbReference type="InterPro" id="IPR007861">
    <property type="entry name" value="DNA_mismatch_repair_MutS_clamp"/>
</dbReference>
<dbReference type="InterPro" id="IPR007696">
    <property type="entry name" value="DNA_mismatch_repair_MutS_core"/>
</dbReference>
<dbReference type="InterPro" id="IPR016151">
    <property type="entry name" value="DNA_mismatch_repair_MutS_N"/>
</dbReference>
<dbReference type="InterPro" id="IPR036187">
    <property type="entry name" value="DNA_mismatch_repair_MutS_sf"/>
</dbReference>
<dbReference type="InterPro" id="IPR007860">
    <property type="entry name" value="DNA_mmatch_repair_MutS_con_dom"/>
</dbReference>
<dbReference type="InterPro" id="IPR045076">
    <property type="entry name" value="MutS"/>
</dbReference>
<dbReference type="InterPro" id="IPR036678">
    <property type="entry name" value="MutS_con_dom_sf"/>
</dbReference>
<dbReference type="InterPro" id="IPR027417">
    <property type="entry name" value="P-loop_NTPase"/>
</dbReference>
<dbReference type="NCBIfam" id="TIGR01070">
    <property type="entry name" value="mutS1"/>
    <property type="match status" value="1"/>
</dbReference>
<dbReference type="NCBIfam" id="NF003810">
    <property type="entry name" value="PRK05399.1"/>
    <property type="match status" value="1"/>
</dbReference>
<dbReference type="PANTHER" id="PTHR11361:SF34">
    <property type="entry name" value="DNA MISMATCH REPAIR PROTEIN MSH1, MITOCHONDRIAL"/>
    <property type="match status" value="1"/>
</dbReference>
<dbReference type="PANTHER" id="PTHR11361">
    <property type="entry name" value="DNA MISMATCH REPAIR PROTEIN MUTS FAMILY MEMBER"/>
    <property type="match status" value="1"/>
</dbReference>
<dbReference type="Pfam" id="PF01624">
    <property type="entry name" value="MutS_I"/>
    <property type="match status" value="1"/>
</dbReference>
<dbReference type="Pfam" id="PF05188">
    <property type="entry name" value="MutS_II"/>
    <property type="match status" value="1"/>
</dbReference>
<dbReference type="Pfam" id="PF05192">
    <property type="entry name" value="MutS_III"/>
    <property type="match status" value="1"/>
</dbReference>
<dbReference type="Pfam" id="PF05190">
    <property type="entry name" value="MutS_IV"/>
    <property type="match status" value="1"/>
</dbReference>
<dbReference type="Pfam" id="PF00488">
    <property type="entry name" value="MutS_V"/>
    <property type="match status" value="1"/>
</dbReference>
<dbReference type="PIRSF" id="PIRSF037677">
    <property type="entry name" value="DNA_mis_repair_Msh6"/>
    <property type="match status" value="1"/>
</dbReference>
<dbReference type="SMART" id="SM00534">
    <property type="entry name" value="MUTSac"/>
    <property type="match status" value="1"/>
</dbReference>
<dbReference type="SMART" id="SM00533">
    <property type="entry name" value="MUTSd"/>
    <property type="match status" value="1"/>
</dbReference>
<dbReference type="SUPFAM" id="SSF55271">
    <property type="entry name" value="DNA repair protein MutS, domain I"/>
    <property type="match status" value="1"/>
</dbReference>
<dbReference type="SUPFAM" id="SSF53150">
    <property type="entry name" value="DNA repair protein MutS, domain II"/>
    <property type="match status" value="1"/>
</dbReference>
<dbReference type="SUPFAM" id="SSF48334">
    <property type="entry name" value="DNA repair protein MutS, domain III"/>
    <property type="match status" value="1"/>
</dbReference>
<dbReference type="SUPFAM" id="SSF52540">
    <property type="entry name" value="P-loop containing nucleoside triphosphate hydrolases"/>
    <property type="match status" value="1"/>
</dbReference>
<dbReference type="PROSITE" id="PS00486">
    <property type="entry name" value="DNA_MISMATCH_REPAIR_2"/>
    <property type="match status" value="1"/>
</dbReference>